<gene>
    <name evidence="1" type="primary">sfsA</name>
    <name type="ordered locus">Z0157</name>
    <name type="ordered locus">ECs0150</name>
</gene>
<name>SFSA_ECO57</name>
<keyword id="KW-0238">DNA-binding</keyword>
<keyword id="KW-1185">Reference proteome</keyword>
<sequence length="234" mass="26229">MEFSPPLQRATLIQRYKRFLADVITPDGRELTLHCPNTGAMTGCATPGDTVWYSTSDNTKRKYPHTWELTQSQSGAFICVNTLWANRLTKEAILNESISELSGYSSLKSEVKYGAERSRIDFMLQADSRPDCYIEVKSVTLAENEQGYFPDAVTERGQKHLRELMSVAAEGQRAVIFFAVLHSAITRFSPARHIDEKYAQLLSEAQQRGVEILAYKAEISAEGMALKKSLPVTL</sequence>
<dbReference type="EMBL" id="AE005174">
    <property type="protein sequence ID" value="AAG54450.1"/>
    <property type="molecule type" value="Genomic_DNA"/>
</dbReference>
<dbReference type="EMBL" id="BA000007">
    <property type="protein sequence ID" value="BAB33573.1"/>
    <property type="molecule type" value="Genomic_DNA"/>
</dbReference>
<dbReference type="PIR" id="F85498">
    <property type="entry name" value="F85498"/>
</dbReference>
<dbReference type="PIR" id="F90647">
    <property type="entry name" value="F90647"/>
</dbReference>
<dbReference type="RefSeq" id="NP_308177.1">
    <property type="nucleotide sequence ID" value="NC_002695.1"/>
</dbReference>
<dbReference type="RefSeq" id="WP_000396036.1">
    <property type="nucleotide sequence ID" value="NZ_VOAI01000002.1"/>
</dbReference>
<dbReference type="SMR" id="P0A824"/>
<dbReference type="STRING" id="155864.Z0157"/>
<dbReference type="GeneID" id="75202039"/>
<dbReference type="GeneID" id="913774"/>
<dbReference type="KEGG" id="ece:Z0157"/>
<dbReference type="KEGG" id="ecs:ECs_0150"/>
<dbReference type="PATRIC" id="fig|386585.9.peg.249"/>
<dbReference type="eggNOG" id="COG1489">
    <property type="taxonomic scope" value="Bacteria"/>
</dbReference>
<dbReference type="HOGENOM" id="CLU_052299_2_0_6"/>
<dbReference type="OMA" id="CANTGPM"/>
<dbReference type="Proteomes" id="UP000000558">
    <property type="component" value="Chromosome"/>
</dbReference>
<dbReference type="Proteomes" id="UP000002519">
    <property type="component" value="Chromosome"/>
</dbReference>
<dbReference type="GO" id="GO:0003677">
    <property type="term" value="F:DNA binding"/>
    <property type="evidence" value="ECO:0007669"/>
    <property type="project" value="UniProtKB-KW"/>
</dbReference>
<dbReference type="CDD" id="cd22359">
    <property type="entry name" value="SfsA-like_bacterial"/>
    <property type="match status" value="1"/>
</dbReference>
<dbReference type="FunFam" id="2.40.50.580:FF:000001">
    <property type="entry name" value="Sugar fermentation stimulation protein A"/>
    <property type="match status" value="1"/>
</dbReference>
<dbReference type="FunFam" id="3.40.1350.60:FF:000001">
    <property type="entry name" value="Sugar fermentation stimulation protein A"/>
    <property type="match status" value="1"/>
</dbReference>
<dbReference type="Gene3D" id="2.40.50.580">
    <property type="match status" value="1"/>
</dbReference>
<dbReference type="Gene3D" id="3.40.1350.60">
    <property type="match status" value="1"/>
</dbReference>
<dbReference type="HAMAP" id="MF_00095">
    <property type="entry name" value="SfsA"/>
    <property type="match status" value="1"/>
</dbReference>
<dbReference type="InterPro" id="IPR005224">
    <property type="entry name" value="SfsA"/>
</dbReference>
<dbReference type="InterPro" id="IPR040452">
    <property type="entry name" value="SfsA_C"/>
</dbReference>
<dbReference type="InterPro" id="IPR041465">
    <property type="entry name" value="SfsA_N"/>
</dbReference>
<dbReference type="NCBIfam" id="TIGR00230">
    <property type="entry name" value="sfsA"/>
    <property type="match status" value="1"/>
</dbReference>
<dbReference type="PANTHER" id="PTHR30545">
    <property type="entry name" value="SUGAR FERMENTATION STIMULATION PROTEIN A"/>
    <property type="match status" value="1"/>
</dbReference>
<dbReference type="PANTHER" id="PTHR30545:SF2">
    <property type="entry name" value="SUGAR FERMENTATION STIMULATION PROTEIN A"/>
    <property type="match status" value="1"/>
</dbReference>
<dbReference type="Pfam" id="PF03749">
    <property type="entry name" value="SfsA"/>
    <property type="match status" value="1"/>
</dbReference>
<dbReference type="Pfam" id="PF17746">
    <property type="entry name" value="SfsA_N"/>
    <property type="match status" value="1"/>
</dbReference>
<feature type="chain" id="PRO_0000152283" description="Sugar fermentation stimulation protein A">
    <location>
        <begin position="1"/>
        <end position="234"/>
    </location>
</feature>
<feature type="DNA-binding region" description="H-T-H motif" evidence="1">
    <location>
        <begin position="201"/>
        <end position="220"/>
    </location>
</feature>
<accession>P0A824</accession>
<accession>P18273</accession>
<reference key="1">
    <citation type="journal article" date="2001" name="Nature">
        <title>Genome sequence of enterohaemorrhagic Escherichia coli O157:H7.</title>
        <authorList>
            <person name="Perna N.T."/>
            <person name="Plunkett G. III"/>
            <person name="Burland V."/>
            <person name="Mau B."/>
            <person name="Glasner J.D."/>
            <person name="Rose D.J."/>
            <person name="Mayhew G.F."/>
            <person name="Evans P.S."/>
            <person name="Gregor J."/>
            <person name="Kirkpatrick H.A."/>
            <person name="Posfai G."/>
            <person name="Hackett J."/>
            <person name="Klink S."/>
            <person name="Boutin A."/>
            <person name="Shao Y."/>
            <person name="Miller L."/>
            <person name="Grotbeck E.J."/>
            <person name="Davis N.W."/>
            <person name="Lim A."/>
            <person name="Dimalanta E.T."/>
            <person name="Potamousis K."/>
            <person name="Apodaca J."/>
            <person name="Anantharaman T.S."/>
            <person name="Lin J."/>
            <person name="Yen G."/>
            <person name="Schwartz D.C."/>
            <person name="Welch R.A."/>
            <person name="Blattner F.R."/>
        </authorList>
    </citation>
    <scope>NUCLEOTIDE SEQUENCE [LARGE SCALE GENOMIC DNA]</scope>
    <source>
        <strain>O157:H7 / EDL933 / ATCC 700927 / EHEC</strain>
    </source>
</reference>
<reference key="2">
    <citation type="journal article" date="2001" name="DNA Res.">
        <title>Complete genome sequence of enterohemorrhagic Escherichia coli O157:H7 and genomic comparison with a laboratory strain K-12.</title>
        <authorList>
            <person name="Hayashi T."/>
            <person name="Makino K."/>
            <person name="Ohnishi M."/>
            <person name="Kurokawa K."/>
            <person name="Ishii K."/>
            <person name="Yokoyama K."/>
            <person name="Han C.-G."/>
            <person name="Ohtsubo E."/>
            <person name="Nakayama K."/>
            <person name="Murata T."/>
            <person name="Tanaka M."/>
            <person name="Tobe T."/>
            <person name="Iida T."/>
            <person name="Takami H."/>
            <person name="Honda T."/>
            <person name="Sasakawa C."/>
            <person name="Ogasawara N."/>
            <person name="Yasunaga T."/>
            <person name="Kuhara S."/>
            <person name="Shiba T."/>
            <person name="Hattori M."/>
            <person name="Shinagawa H."/>
        </authorList>
    </citation>
    <scope>NUCLEOTIDE SEQUENCE [LARGE SCALE GENOMIC DNA]</scope>
    <source>
        <strain>O157:H7 / Sakai / RIMD 0509952 / EHEC</strain>
    </source>
</reference>
<comment type="function">
    <text evidence="1">Binds to DNA non-specifically. Could be a regulatory factor involved in maltose metabolism.</text>
</comment>
<comment type="similarity">
    <text evidence="1">Belongs to the SfsA family.</text>
</comment>
<organism>
    <name type="scientific">Escherichia coli O157:H7</name>
    <dbReference type="NCBI Taxonomy" id="83334"/>
    <lineage>
        <taxon>Bacteria</taxon>
        <taxon>Pseudomonadati</taxon>
        <taxon>Pseudomonadota</taxon>
        <taxon>Gammaproteobacteria</taxon>
        <taxon>Enterobacterales</taxon>
        <taxon>Enterobacteriaceae</taxon>
        <taxon>Escherichia</taxon>
    </lineage>
</organism>
<evidence type="ECO:0000255" key="1">
    <source>
        <dbReference type="HAMAP-Rule" id="MF_00095"/>
    </source>
</evidence>
<protein>
    <recommendedName>
        <fullName evidence="1">Sugar fermentation stimulation protein A</fullName>
    </recommendedName>
</protein>
<proteinExistence type="inferred from homology"/>